<feature type="chain" id="PRO_0000454924" description="Septin-4">
    <location>
        <begin position="1"/>
        <end position="459"/>
    </location>
</feature>
<feature type="domain" description="Septin-type G" evidence="5">
    <location>
        <begin position="122"/>
        <end position="395"/>
    </location>
</feature>
<feature type="region of interest" description="Disordered" evidence="6">
    <location>
        <begin position="18"/>
        <end position="52"/>
    </location>
</feature>
<feature type="region of interest" description="Disordered" evidence="6">
    <location>
        <begin position="70"/>
        <end position="98"/>
    </location>
</feature>
<feature type="region of interest" description="G1 motif" evidence="5">
    <location>
        <begin position="132"/>
        <end position="139"/>
    </location>
</feature>
<feature type="region of interest" description="G3 motif" evidence="5">
    <location>
        <begin position="189"/>
        <end position="192"/>
    </location>
</feature>
<feature type="region of interest" description="G4 motif" evidence="5">
    <location>
        <begin position="270"/>
        <end position="273"/>
    </location>
</feature>
<feature type="region of interest" description="Disordered" evidence="6">
    <location>
        <begin position="410"/>
        <end position="430"/>
    </location>
</feature>
<feature type="coiled-coil region" evidence="4">
    <location>
        <begin position="434"/>
        <end position="459"/>
    </location>
</feature>
<feature type="binding site" evidence="3">
    <location>
        <begin position="132"/>
        <end position="139"/>
    </location>
    <ligand>
        <name>GTP</name>
        <dbReference type="ChEBI" id="CHEBI:37565"/>
    </ligand>
</feature>
<feature type="binding site" evidence="3">
    <location>
        <position position="166"/>
    </location>
    <ligand>
        <name>GTP</name>
        <dbReference type="ChEBI" id="CHEBI:37565"/>
    </ligand>
</feature>
<feature type="binding site" evidence="3">
    <location>
        <begin position="271"/>
        <end position="279"/>
    </location>
    <ligand>
        <name>GTP</name>
        <dbReference type="ChEBI" id="CHEBI:37565"/>
    </ligand>
</feature>
<feature type="binding site" evidence="3">
    <location>
        <position position="329"/>
    </location>
    <ligand>
        <name>GTP</name>
        <dbReference type="ChEBI" id="CHEBI:37565"/>
    </ligand>
</feature>
<feature type="binding site" evidence="3">
    <location>
        <position position="344"/>
    </location>
    <ligand>
        <name>GTP</name>
        <dbReference type="ChEBI" id="CHEBI:37565"/>
    </ligand>
</feature>
<feature type="modified residue" description="Phosphoserine" evidence="2">
    <location>
        <position position="10"/>
    </location>
</feature>
<feature type="modified residue" description="Phosphoserine" evidence="2">
    <location>
        <position position="49"/>
    </location>
</feature>
<feature type="modified residue" description="Phosphoserine" evidence="2">
    <location>
        <position position="98"/>
    </location>
</feature>
<feature type="modified residue" description="Phosphoserine" evidence="2">
    <location>
        <position position="99"/>
    </location>
</feature>
<feature type="modified residue" description="Phosphoserine" evidence="2">
    <location>
        <position position="306"/>
    </location>
</feature>
<feature type="modified residue" description="Phosphoserine" evidence="2">
    <location>
        <position position="413"/>
    </location>
</feature>
<feature type="modified residue" description="Phosphothreonine" evidence="2">
    <location>
        <position position="415"/>
    </location>
</feature>
<gene>
    <name evidence="9" type="primary">Septin4</name>
    <name evidence="1" type="synonym">Arts</name>
    <name evidence="2" type="synonym">Bh5</name>
    <name evidence="2" type="synonym">Gm11492</name>
    <name evidence="2" type="synonym">Pnut12</name>
    <name evidence="2" type="synonym">Sep4</name>
    <name evidence="9" type="synonym">Sept4</name>
</gene>
<protein>
    <recommendedName>
        <fullName evidence="9">Septin-4</fullName>
    </recommendedName>
    <alternativeName>
        <fullName evidence="1">Apoptosis-related protein in the TGF-beta signaling pathway</fullName>
        <shortName evidence="1">Arts</shortName>
    </alternativeName>
    <alternativeName>
        <fullName evidence="1">Bradeion beta</fullName>
    </alternativeName>
    <alternativeName>
        <fullName evidence="2">Brain protein H5</fullName>
    </alternativeName>
    <alternativeName>
        <fullName evidence="1">CE5B3 beta</fullName>
    </alternativeName>
    <alternativeName>
        <fullName evidence="1">Cell division control-related protein 2</fullName>
        <shortName evidence="1">hCDCREL-2</shortName>
    </alternativeName>
    <alternativeName>
        <fullName evidence="1">Peanut-like protein 2</fullName>
    </alternativeName>
</protein>
<dbReference type="EMBL" id="AABR07030186">
    <property type="status" value="NOT_ANNOTATED_CDS"/>
    <property type="molecule type" value="Genomic_DNA"/>
</dbReference>
<dbReference type="RefSeq" id="NP_001401264.1">
    <property type="nucleotide sequence ID" value="NM_001414335.1"/>
</dbReference>
<dbReference type="RefSeq" id="XP_017452610.1">
    <property type="nucleotide sequence ID" value="XM_017597121.1"/>
</dbReference>
<dbReference type="SMR" id="A0A096MJN4"/>
<dbReference type="FunCoup" id="A0A096MJN4">
    <property type="interactions" value="937"/>
</dbReference>
<dbReference type="iPTMnet" id="A0A096MJN4"/>
<dbReference type="PhosphoSitePlus" id="A0A096MJN4"/>
<dbReference type="jPOST" id="A0A096MJN4"/>
<dbReference type="Ensembl" id="ENSRNOT00000076026.3">
    <property type="protein sequence ID" value="ENSRNOP00000068198.1"/>
    <property type="gene ID" value="ENSRNOG00000007367.9"/>
</dbReference>
<dbReference type="GeneID" id="287606"/>
<dbReference type="AGR" id="RGD:1308781"/>
<dbReference type="RGD" id="1308781">
    <property type="gene designation" value="Septin4"/>
</dbReference>
<dbReference type="GeneTree" id="ENSGT00940000157152"/>
<dbReference type="HOGENOM" id="CLU_017718_0_1_1"/>
<dbReference type="InParanoid" id="A0A096MJN4"/>
<dbReference type="Reactome" id="R-RNO-111457">
    <property type="pathway name" value="Release of apoptotic factors from the mitochondria"/>
</dbReference>
<dbReference type="Reactome" id="R-RNO-111469">
    <property type="pathway name" value="SMAC, XIAP-regulated apoptotic response"/>
</dbReference>
<dbReference type="PRO" id="PR:A0A096MJN4"/>
<dbReference type="Proteomes" id="UP000002494">
    <property type="component" value="Chromosome 10"/>
</dbReference>
<dbReference type="Bgee" id="ENSRNOG00000007367">
    <property type="expression patterns" value="Expressed in cerebellum and 20 other cell types or tissues"/>
</dbReference>
<dbReference type="ExpressionAtlas" id="A0A096MJN4">
    <property type="expression patterns" value="baseline and differential"/>
</dbReference>
<dbReference type="GO" id="GO:0030424">
    <property type="term" value="C:axon"/>
    <property type="evidence" value="ECO:0000266"/>
    <property type="project" value="RGD"/>
</dbReference>
<dbReference type="GO" id="GO:0043679">
    <property type="term" value="C:axon terminus"/>
    <property type="evidence" value="ECO:0000266"/>
    <property type="project" value="RGD"/>
</dbReference>
<dbReference type="GO" id="GO:0032153">
    <property type="term" value="C:cell division site"/>
    <property type="evidence" value="ECO:0000318"/>
    <property type="project" value="GO_Central"/>
</dbReference>
<dbReference type="GO" id="GO:0042995">
    <property type="term" value="C:cell projection"/>
    <property type="evidence" value="ECO:0000266"/>
    <property type="project" value="RGD"/>
</dbReference>
<dbReference type="GO" id="GO:0005737">
    <property type="term" value="C:cytoplasm"/>
    <property type="evidence" value="ECO:0000266"/>
    <property type="project" value="RGD"/>
</dbReference>
<dbReference type="GO" id="GO:0030425">
    <property type="term" value="C:dendrite"/>
    <property type="evidence" value="ECO:0000266"/>
    <property type="project" value="RGD"/>
</dbReference>
<dbReference type="GO" id="GO:0098691">
    <property type="term" value="C:dopaminergic synapse"/>
    <property type="evidence" value="ECO:0000266"/>
    <property type="project" value="RGD"/>
</dbReference>
<dbReference type="GO" id="GO:0015630">
    <property type="term" value="C:microtubule cytoskeleton"/>
    <property type="evidence" value="ECO:0000318"/>
    <property type="project" value="GO_Central"/>
</dbReference>
<dbReference type="GO" id="GO:0005739">
    <property type="term" value="C:mitochondrion"/>
    <property type="evidence" value="ECO:0000266"/>
    <property type="project" value="RGD"/>
</dbReference>
<dbReference type="GO" id="GO:0031514">
    <property type="term" value="C:motile cilium"/>
    <property type="evidence" value="ECO:0000266"/>
    <property type="project" value="RGD"/>
</dbReference>
<dbReference type="GO" id="GO:0043204">
    <property type="term" value="C:perikaryon"/>
    <property type="evidence" value="ECO:0000266"/>
    <property type="project" value="RGD"/>
</dbReference>
<dbReference type="GO" id="GO:0098793">
    <property type="term" value="C:presynapse"/>
    <property type="evidence" value="ECO:0000266"/>
    <property type="project" value="RGD"/>
</dbReference>
<dbReference type="GO" id="GO:0031105">
    <property type="term" value="C:septin complex"/>
    <property type="evidence" value="ECO:0000266"/>
    <property type="project" value="RGD"/>
</dbReference>
<dbReference type="GO" id="GO:0005940">
    <property type="term" value="C:septin ring"/>
    <property type="evidence" value="ECO:0000318"/>
    <property type="project" value="GO_Central"/>
</dbReference>
<dbReference type="GO" id="GO:0097227">
    <property type="term" value="C:sperm annulus"/>
    <property type="evidence" value="ECO:0000266"/>
    <property type="project" value="RGD"/>
</dbReference>
<dbReference type="GO" id="GO:0036126">
    <property type="term" value="C:sperm flagellum"/>
    <property type="evidence" value="ECO:0000266"/>
    <property type="project" value="RGD"/>
</dbReference>
<dbReference type="GO" id="GO:0008021">
    <property type="term" value="C:synaptic vesicle"/>
    <property type="evidence" value="ECO:0000318"/>
    <property type="project" value="GO_Central"/>
</dbReference>
<dbReference type="GO" id="GO:0005525">
    <property type="term" value="F:GTP binding"/>
    <property type="evidence" value="ECO:0000266"/>
    <property type="project" value="RGD"/>
</dbReference>
<dbReference type="GO" id="GO:0003924">
    <property type="term" value="F:GTPase activity"/>
    <property type="evidence" value="ECO:0000266"/>
    <property type="project" value="RGD"/>
</dbReference>
<dbReference type="GO" id="GO:0042802">
    <property type="term" value="F:identical protein binding"/>
    <property type="evidence" value="ECO:0000266"/>
    <property type="project" value="RGD"/>
</dbReference>
<dbReference type="GO" id="GO:0000287">
    <property type="term" value="F:magnesium ion binding"/>
    <property type="evidence" value="ECO:0000266"/>
    <property type="project" value="RGD"/>
</dbReference>
<dbReference type="GO" id="GO:0060090">
    <property type="term" value="F:molecular adaptor activity"/>
    <property type="evidence" value="ECO:0000318"/>
    <property type="project" value="GO_Central"/>
</dbReference>
<dbReference type="GO" id="GO:0007420">
    <property type="term" value="P:brain development"/>
    <property type="evidence" value="ECO:0000266"/>
    <property type="project" value="RGD"/>
</dbReference>
<dbReference type="GO" id="GO:0061640">
    <property type="term" value="P:cytoskeleton-dependent cytokinesis"/>
    <property type="evidence" value="ECO:0000318"/>
    <property type="project" value="GO_Central"/>
</dbReference>
<dbReference type="GO" id="GO:0030317">
    <property type="term" value="P:flagellated sperm motility"/>
    <property type="evidence" value="ECO:0000266"/>
    <property type="project" value="RGD"/>
</dbReference>
<dbReference type="GO" id="GO:0061484">
    <property type="term" value="P:hematopoietic stem cell homeostasis"/>
    <property type="evidence" value="ECO:0000266"/>
    <property type="project" value="RGD"/>
</dbReference>
<dbReference type="GO" id="GO:2000647">
    <property type="term" value="P:negative regulation of stem cell proliferation"/>
    <property type="evidence" value="ECO:0000266"/>
    <property type="project" value="RGD"/>
</dbReference>
<dbReference type="GO" id="GO:0001764">
    <property type="term" value="P:neuron migration"/>
    <property type="evidence" value="ECO:0000266"/>
    <property type="project" value="RGD"/>
</dbReference>
<dbReference type="GO" id="GO:0043065">
    <property type="term" value="P:positive regulation of apoptotic process"/>
    <property type="evidence" value="ECO:0000266"/>
    <property type="project" value="RGD"/>
</dbReference>
<dbReference type="GO" id="GO:2001244">
    <property type="term" value="P:positive regulation of intrinsic apoptotic signaling pathway"/>
    <property type="evidence" value="ECO:0000266"/>
    <property type="project" value="RGD"/>
</dbReference>
<dbReference type="GO" id="GO:0031398">
    <property type="term" value="P:positive regulation of protein ubiquitination"/>
    <property type="evidence" value="ECO:0000266"/>
    <property type="project" value="RGD"/>
</dbReference>
<dbReference type="GO" id="GO:0008104">
    <property type="term" value="P:protein localization"/>
    <property type="evidence" value="ECO:0000318"/>
    <property type="project" value="GO_Central"/>
</dbReference>
<dbReference type="GO" id="GO:0017157">
    <property type="term" value="P:regulation of exocytosis"/>
    <property type="evidence" value="ECO:0000318"/>
    <property type="project" value="GO_Central"/>
</dbReference>
<dbReference type="GO" id="GO:0048240">
    <property type="term" value="P:sperm capacitation"/>
    <property type="evidence" value="ECO:0000266"/>
    <property type="project" value="RGD"/>
</dbReference>
<dbReference type="GO" id="GO:0030382">
    <property type="term" value="P:sperm mitochondrion organization"/>
    <property type="evidence" value="ECO:0000266"/>
    <property type="project" value="RGD"/>
</dbReference>
<dbReference type="GO" id="GO:0007286">
    <property type="term" value="P:spermatid development"/>
    <property type="evidence" value="ECO:0000266"/>
    <property type="project" value="RGD"/>
</dbReference>
<dbReference type="GO" id="GO:0048515">
    <property type="term" value="P:spermatid differentiation"/>
    <property type="evidence" value="ECO:0000266"/>
    <property type="project" value="RGD"/>
</dbReference>
<dbReference type="GO" id="GO:0048729">
    <property type="term" value="P:tissue morphogenesis"/>
    <property type="evidence" value="ECO:0000266"/>
    <property type="project" value="RGD"/>
</dbReference>
<dbReference type="CDD" id="cd01850">
    <property type="entry name" value="CDC_Septin"/>
    <property type="match status" value="1"/>
</dbReference>
<dbReference type="FunFam" id="3.40.50.300:FF:000064">
    <property type="entry name" value="Septin 4"/>
    <property type="match status" value="1"/>
</dbReference>
<dbReference type="Gene3D" id="3.40.50.300">
    <property type="entry name" value="P-loop containing nucleotide triphosphate hydrolases"/>
    <property type="match status" value="1"/>
</dbReference>
<dbReference type="InterPro" id="IPR030379">
    <property type="entry name" value="G_SEPTIN_dom"/>
</dbReference>
<dbReference type="InterPro" id="IPR027417">
    <property type="entry name" value="P-loop_NTPase"/>
</dbReference>
<dbReference type="InterPro" id="IPR016491">
    <property type="entry name" value="Septin"/>
</dbReference>
<dbReference type="PANTHER" id="PTHR18884">
    <property type="entry name" value="SEPTIN"/>
    <property type="match status" value="1"/>
</dbReference>
<dbReference type="Pfam" id="PF00735">
    <property type="entry name" value="Septin"/>
    <property type="match status" value="1"/>
</dbReference>
<dbReference type="SUPFAM" id="SSF52540">
    <property type="entry name" value="P-loop containing nucleoside triphosphate hydrolases"/>
    <property type="match status" value="1"/>
</dbReference>
<dbReference type="PROSITE" id="PS51719">
    <property type="entry name" value="G_SEPTIN"/>
    <property type="match status" value="1"/>
</dbReference>
<comment type="function">
    <text evidence="2">Filament-forming cytoskeletal GTPase. Pro-apoptotic protein involved in LGR5-positive intestinal stem cell and Paneth cell expansion in the intestines, via its interaction with XIAP (By similarity). May also play a role in the regulation of cell fate in the intestine (By similarity). Positive regulator of apoptosis involved in hematopoietic stem cell homeostasis; via its interaction with XIAP (By similarity). Negative regulator of repair and hair follicle regeneration in response to injury, due to inhibition of hair follicle stem cell proliferation, potentially via its interaction with XIAP (By similarity). Plays an important role in male fertility and sperm motility (By similarity). During spermiogenesis, essential for the establishment of the annulus (a fibrous ring structure connecting the midpiece and the principal piece of the sperm flagellum) which is a requisite for the structural and mechanical integrity of the sperm (By similarity). Involved in the migration of cortical neurons and the formation of neuron leading processes during embryonic development (By similarity). Required for dopaminergic metabolism in presynaptic autoreceptors; potentially via activity as a presynaptic scaffold protein (By similarity).</text>
</comment>
<comment type="subunit">
    <text evidence="1 2 7">Septins polymerize into heterooligomeric protein complexes that form filaments, and can associate with cellular membranes, actin filaments and microtubules. GTPase activity is required for filament formation. Interacts with SEPTIN8 (By similarity). Component of a septin core octameric complex consisting of SEPTIN12, SEPTIN7, SEPTIN6 and SEPTIN2 or SEPTIN4 in the order 12-7-6-2-2-6-7-12 or 12-7-6-4-4-6-7-12 (By similarity). Interacts with SEPTIN14 (via C-terminus) (By similarity). Interacts with DYRK1A (PubMed:18938227). Interacts with SLC6A3/DAT and SNCA/alpha-synuclein. Interacts with STX1A; in the striatum. Interacts with XIAP (via BIR3 domain) following the induction of apoptosis. Interacts with AREL1 (via HECT domain); in the cytoplasm following induction of apoptosis (By similarity).</text>
</comment>
<comment type="subcellular location">
    <subcellularLocation>
        <location evidence="2">Cytoplasm</location>
    </subcellularLocation>
    <subcellularLocation>
        <location evidence="2">Cell projection</location>
        <location evidence="2">Cilium</location>
        <location evidence="2">Flagellum</location>
    </subcellularLocation>
    <subcellularLocation>
        <location evidence="1">Cytoplasmic vesicle</location>
        <location evidence="1">Secretory vesicle</location>
    </subcellularLocation>
    <subcellularLocation>
        <location evidence="2">Cell projection</location>
        <location evidence="2">Axon</location>
    </subcellularLocation>
    <subcellularLocation>
        <location evidence="2">Cell projection</location>
        <location evidence="2">Dendrite</location>
    </subcellularLocation>
    <subcellularLocation>
        <location evidence="2">Perikaryon</location>
    </subcellularLocation>
    <text evidence="1 2">Found in the sperm annulus, a fibrous ring structure connecting the midpiece and the principal piece of the sperm flagellum (By similarity). In platelets, found in areas surrounding alpha-granules (By similarity). Expressed and colocalized with SLC6A3 and SNCA in axon terminals, especially at the varicosities (By similarity).</text>
</comment>
<comment type="PTM">
    <text evidence="2">Phosphorylated by DYRK1A.</text>
</comment>
<comment type="similarity">
    <text evidence="5">Belongs to the TRAFAC class TrmE-Era-EngA-EngB-Septin-like GTPase superfamily. Septin GTPase family.</text>
</comment>
<proteinExistence type="evidence at protein level"/>
<name>SEPT4_RAT</name>
<evidence type="ECO:0000250" key="1">
    <source>
        <dbReference type="UniProtKB" id="O43236"/>
    </source>
</evidence>
<evidence type="ECO:0000250" key="2">
    <source>
        <dbReference type="UniProtKB" id="P28661"/>
    </source>
</evidence>
<evidence type="ECO:0000250" key="3">
    <source>
        <dbReference type="UniProtKB" id="Q9UH03"/>
    </source>
</evidence>
<evidence type="ECO:0000255" key="4"/>
<evidence type="ECO:0000255" key="5">
    <source>
        <dbReference type="PROSITE-ProRule" id="PRU01056"/>
    </source>
</evidence>
<evidence type="ECO:0000256" key="6">
    <source>
        <dbReference type="SAM" id="MobiDB-lite"/>
    </source>
</evidence>
<evidence type="ECO:0000269" key="7">
    <source>
    </source>
</evidence>
<evidence type="ECO:0000312" key="8">
    <source>
        <dbReference type="Proteomes" id="UP000002494"/>
    </source>
</evidence>
<evidence type="ECO:0000312" key="9">
    <source>
        <dbReference type="RGD" id="1308781"/>
    </source>
</evidence>
<evidence type="ECO:0007744" key="10">
    <source>
    </source>
</evidence>
<organism evidence="8">
    <name type="scientific">Rattus norvegicus</name>
    <name type="common">Rat</name>
    <dbReference type="NCBI Taxonomy" id="10116"/>
    <lineage>
        <taxon>Eukaryota</taxon>
        <taxon>Metazoa</taxon>
        <taxon>Chordata</taxon>
        <taxon>Craniata</taxon>
        <taxon>Vertebrata</taxon>
        <taxon>Euteleostomi</taxon>
        <taxon>Mammalia</taxon>
        <taxon>Eutheria</taxon>
        <taxon>Euarchontoglires</taxon>
        <taxon>Glires</taxon>
        <taxon>Rodentia</taxon>
        <taxon>Myomorpha</taxon>
        <taxon>Muroidea</taxon>
        <taxon>Muridae</taxon>
        <taxon>Murinae</taxon>
        <taxon>Rattus</taxon>
    </lineage>
</organism>
<keyword id="KW-0131">Cell cycle</keyword>
<keyword id="KW-0132">Cell division</keyword>
<keyword id="KW-0966">Cell projection</keyword>
<keyword id="KW-0969">Cilium</keyword>
<keyword id="KW-0175">Coiled coil</keyword>
<keyword id="KW-0963">Cytoplasm</keyword>
<keyword id="KW-0968">Cytoplasmic vesicle</keyword>
<keyword id="KW-0221">Differentiation</keyword>
<keyword id="KW-0282">Flagellum</keyword>
<keyword id="KW-0342">GTP-binding</keyword>
<keyword id="KW-0547">Nucleotide-binding</keyword>
<keyword id="KW-0597">Phosphoprotein</keyword>
<keyword id="KW-1185">Reference proteome</keyword>
<keyword id="KW-0744">Spermatogenesis</keyword>
<sequence>MIKHFLEDNSDDAELSKFVKDFPGSEPCHPTESKTRVARPQILEPRPQSPDLCDDDVEFRATLWSQPSDSQQYFCPPAPLSPSSRPRSPWGKLDPYDSSEDDKEYVGFATLPNQVHRKSVKKGFDFTLMVAGESGLGKSTLVNSLFLTDLYRDRKLLGAEERIMQTVEITKHAVDIEEKGVRLRLTIVDTPGFGDAVNNTECWRPVAEYIDQQFEQYFRDESGLNRKNIQDNRVHCCLYFISPFGHGLRPLDVEFMKALHQRVNIVPILAKADTLTPSEVDRKKCKIREEIEHFGIKIYQFPDCDSDEDEDFKLQDQALKESIPFAVIGSNTVVEARGRRVRGRLYPWGIVEVENPGHCDFVKLRTMLVRTHMQDLKDVTRETHYENYRAQCIQSMTRLVVKERNRNKLTRESGTDFPIPAVPPGTDPETEKLIREKDEELRRMQEMLHKIQRQMKETH</sequence>
<accession>A0A096MJN4</accession>
<reference evidence="8" key="1">
    <citation type="journal article" date="2004" name="Nature">
        <title>Genome sequence of the Brown Norway rat yields insights into mammalian evolution.</title>
        <authorList>
            <person name="Gibbs R.A."/>
            <person name="Weinstock G.M."/>
            <person name="Metzker M.L."/>
            <person name="Muzny D.M."/>
            <person name="Sodergren E.J."/>
            <person name="Scherer S."/>
            <person name="Scott G."/>
            <person name="Steffen D."/>
            <person name="Worley K.C."/>
            <person name="Burch P.E."/>
            <person name="Okwuonu G."/>
            <person name="Hines S."/>
            <person name="Lewis L."/>
            <person name="Deramo C."/>
            <person name="Delgado O."/>
            <person name="Dugan-Rocha S."/>
            <person name="Miner G."/>
            <person name="Morgan M."/>
            <person name="Hawes A."/>
            <person name="Gill R."/>
            <person name="Holt R.A."/>
            <person name="Adams M.D."/>
            <person name="Amanatides P.G."/>
            <person name="Baden-Tillson H."/>
            <person name="Barnstead M."/>
            <person name="Chin S."/>
            <person name="Evans C.A."/>
            <person name="Ferriera S."/>
            <person name="Fosler C."/>
            <person name="Glodek A."/>
            <person name="Gu Z."/>
            <person name="Jennings D."/>
            <person name="Kraft C.L."/>
            <person name="Nguyen T."/>
            <person name="Pfannkoch C.M."/>
            <person name="Sitter C."/>
            <person name="Sutton G.G."/>
            <person name="Venter J.C."/>
            <person name="Woodage T."/>
            <person name="Smith D."/>
            <person name="Lee H.-M."/>
            <person name="Gustafson E."/>
            <person name="Cahill P."/>
            <person name="Kana A."/>
            <person name="Doucette-Stamm L."/>
            <person name="Weinstock K."/>
            <person name="Fechtel K."/>
            <person name="Weiss R.B."/>
            <person name="Dunn D.M."/>
            <person name="Green E.D."/>
            <person name="Blakesley R.W."/>
            <person name="Bouffard G.G."/>
            <person name="De Jong P.J."/>
            <person name="Osoegawa K."/>
            <person name="Zhu B."/>
            <person name="Marra M."/>
            <person name="Schein J."/>
            <person name="Bosdet I."/>
            <person name="Fjell C."/>
            <person name="Jones S."/>
            <person name="Krzywinski M."/>
            <person name="Mathewson C."/>
            <person name="Siddiqui A."/>
            <person name="Wye N."/>
            <person name="McPherson J."/>
            <person name="Zhao S."/>
            <person name="Fraser C.M."/>
            <person name="Shetty J."/>
            <person name="Shatsman S."/>
            <person name="Geer K."/>
            <person name="Chen Y."/>
            <person name="Abramzon S."/>
            <person name="Nierman W.C."/>
            <person name="Havlak P.H."/>
            <person name="Chen R."/>
            <person name="Durbin K.J."/>
            <person name="Egan A."/>
            <person name="Ren Y."/>
            <person name="Song X.-Z."/>
            <person name="Li B."/>
            <person name="Liu Y."/>
            <person name="Qin X."/>
            <person name="Cawley S."/>
            <person name="Cooney A.J."/>
            <person name="D'Souza L.M."/>
            <person name="Martin K."/>
            <person name="Wu J.Q."/>
            <person name="Gonzalez-Garay M.L."/>
            <person name="Jackson A.R."/>
            <person name="Kalafus K.J."/>
            <person name="McLeod M.P."/>
            <person name="Milosavljevic A."/>
            <person name="Virk D."/>
            <person name="Volkov A."/>
            <person name="Wheeler D.A."/>
            <person name="Zhang Z."/>
            <person name="Bailey J.A."/>
            <person name="Eichler E.E."/>
            <person name="Tuzun E."/>
            <person name="Birney E."/>
            <person name="Mongin E."/>
            <person name="Ureta-Vidal A."/>
            <person name="Woodwark C."/>
            <person name="Zdobnov E."/>
            <person name="Bork P."/>
            <person name="Suyama M."/>
            <person name="Torrents D."/>
            <person name="Alexandersson M."/>
            <person name="Trask B.J."/>
            <person name="Young J.M."/>
            <person name="Huang H."/>
            <person name="Wang H."/>
            <person name="Xing H."/>
            <person name="Daniels S."/>
            <person name="Gietzen D."/>
            <person name="Schmidt J."/>
            <person name="Stevens K."/>
            <person name="Vitt U."/>
            <person name="Wingrove J."/>
            <person name="Camara F."/>
            <person name="Mar Alba M."/>
            <person name="Abril J.F."/>
            <person name="Guigo R."/>
            <person name="Smit A."/>
            <person name="Dubchak I."/>
            <person name="Rubin E.M."/>
            <person name="Couronne O."/>
            <person name="Poliakov A."/>
            <person name="Huebner N."/>
            <person name="Ganten D."/>
            <person name="Goesele C."/>
            <person name="Hummel O."/>
            <person name="Kreitler T."/>
            <person name="Lee Y.-A."/>
            <person name="Monti J."/>
            <person name="Schulz H."/>
            <person name="Zimdahl H."/>
            <person name="Himmelbauer H."/>
            <person name="Lehrach H."/>
            <person name="Jacob H.J."/>
            <person name="Bromberg S."/>
            <person name="Gullings-Handley J."/>
            <person name="Jensen-Seaman M.I."/>
            <person name="Kwitek A.E."/>
            <person name="Lazar J."/>
            <person name="Pasko D."/>
            <person name="Tonellato P.J."/>
            <person name="Twigger S."/>
            <person name="Ponting C.P."/>
            <person name="Duarte J.M."/>
            <person name="Rice S."/>
            <person name="Goodstadt L."/>
            <person name="Beatson S.A."/>
            <person name="Emes R.D."/>
            <person name="Winter E.E."/>
            <person name="Webber C."/>
            <person name="Brandt P."/>
            <person name="Nyakatura G."/>
            <person name="Adetobi M."/>
            <person name="Chiaromonte F."/>
            <person name="Elnitski L."/>
            <person name="Eswara P."/>
            <person name="Hardison R.C."/>
            <person name="Hou M."/>
            <person name="Kolbe D."/>
            <person name="Makova K."/>
            <person name="Miller W."/>
            <person name="Nekrutenko A."/>
            <person name="Riemer C."/>
            <person name="Schwartz S."/>
            <person name="Taylor J."/>
            <person name="Yang S."/>
            <person name="Zhang Y."/>
            <person name="Lindpaintner K."/>
            <person name="Andrews T.D."/>
            <person name="Caccamo M."/>
            <person name="Clamp M."/>
            <person name="Clarke L."/>
            <person name="Curwen V."/>
            <person name="Durbin R.M."/>
            <person name="Eyras E."/>
            <person name="Searle S.M."/>
            <person name="Cooper G.M."/>
            <person name="Batzoglou S."/>
            <person name="Brudno M."/>
            <person name="Sidow A."/>
            <person name="Stone E.A."/>
            <person name="Payseur B.A."/>
            <person name="Bourque G."/>
            <person name="Lopez-Otin C."/>
            <person name="Puente X.S."/>
            <person name="Chakrabarti K."/>
            <person name="Chatterji S."/>
            <person name="Dewey C."/>
            <person name="Pachter L."/>
            <person name="Bray N."/>
            <person name="Yap V.B."/>
            <person name="Caspi A."/>
            <person name="Tesler G."/>
            <person name="Pevzner P.A."/>
            <person name="Haussler D."/>
            <person name="Roskin K.M."/>
            <person name="Baertsch R."/>
            <person name="Clawson H."/>
            <person name="Furey T.S."/>
            <person name="Hinrichs A.S."/>
            <person name="Karolchik D."/>
            <person name="Kent W.J."/>
            <person name="Rosenbloom K.R."/>
            <person name="Trumbower H."/>
            <person name="Weirauch M."/>
            <person name="Cooper D.N."/>
            <person name="Stenson P.D."/>
            <person name="Ma B."/>
            <person name="Brent M."/>
            <person name="Arumugam M."/>
            <person name="Shteynberg D."/>
            <person name="Copley R.R."/>
            <person name="Taylor M.S."/>
            <person name="Riethman H."/>
            <person name="Mudunuri U."/>
            <person name="Peterson J."/>
            <person name="Guyer M."/>
            <person name="Felsenfeld A."/>
            <person name="Old S."/>
            <person name="Mockrin S."/>
            <person name="Collins F.S."/>
        </authorList>
    </citation>
    <scope>NUCLEOTIDE SEQUENCE [LARGE SCALE GENOMIC DNA]</scope>
    <source>
        <strain evidence="8">Brown Norway</strain>
    </source>
</reference>
<reference evidence="10" key="2">
    <citation type="journal article" date="2012" name="Nat. Commun.">
        <title>Quantitative maps of protein phosphorylation sites across 14 different rat organs and tissues.</title>
        <authorList>
            <person name="Lundby A."/>
            <person name="Secher A."/>
            <person name="Lage K."/>
            <person name="Nordsborg N.B."/>
            <person name="Dmytriyev A."/>
            <person name="Lundby C."/>
            <person name="Olsen J.V."/>
        </authorList>
    </citation>
    <scope>IDENTIFICATION BY MASS SPECTROMETRY [LARGE SCALE ANALYSIS]</scope>
</reference>
<reference key="3">
    <citation type="journal article" date="2008" name="Neuroscience">
        <title>The Down syndrome candidate dual-specificity tyrosine phosphorylation-regulated kinase 1A phosphorylates the neurodegeneration-related septin 4.</title>
        <authorList>
            <person name="Sitz J.H."/>
            <person name="Baumgaertel K."/>
            <person name="Haemmerle B."/>
            <person name="Papadopoulos C."/>
            <person name="Hekerman P."/>
            <person name="Tejedor F.J."/>
            <person name="Becker W."/>
            <person name="Lutz B."/>
        </authorList>
    </citation>
    <scope>INTERACTION WITH DYRK1A</scope>
</reference>